<feature type="chain" id="PRO_0000159155" description="Probable ferredoxin">
    <location>
        <begin position="1"/>
        <end position="58"/>
    </location>
</feature>
<feature type="domain" description="4Fe-4S ferredoxin-type 1" evidence="2">
    <location>
        <begin position="2"/>
        <end position="30"/>
    </location>
</feature>
<feature type="domain" description="4Fe-4S ferredoxin-type 2" evidence="2">
    <location>
        <begin position="31"/>
        <end position="58"/>
    </location>
</feature>
<feature type="binding site" evidence="1">
    <location>
        <position position="10"/>
    </location>
    <ligand>
        <name>[4Fe-4S] cluster</name>
        <dbReference type="ChEBI" id="CHEBI:49883"/>
        <label>1</label>
    </ligand>
</feature>
<feature type="binding site" evidence="1">
    <location>
        <position position="13"/>
    </location>
    <ligand>
        <name>[4Fe-4S] cluster</name>
        <dbReference type="ChEBI" id="CHEBI:49883"/>
        <label>1</label>
    </ligand>
</feature>
<feature type="binding site" evidence="1">
    <location>
        <position position="16"/>
    </location>
    <ligand>
        <name>[4Fe-4S] cluster</name>
        <dbReference type="ChEBI" id="CHEBI:49883"/>
        <label>1</label>
    </ligand>
</feature>
<feature type="binding site" evidence="1">
    <location>
        <position position="20"/>
    </location>
    <ligand>
        <name>[4Fe-4S] cluster</name>
        <dbReference type="ChEBI" id="CHEBI:49883"/>
        <label>2</label>
    </ligand>
</feature>
<feature type="binding site" evidence="1">
    <location>
        <position position="40"/>
    </location>
    <ligand>
        <name>[4Fe-4S] cluster</name>
        <dbReference type="ChEBI" id="CHEBI:49883"/>
        <label>2</label>
    </ligand>
</feature>
<feature type="binding site" evidence="1">
    <location>
        <position position="43"/>
    </location>
    <ligand>
        <name>[4Fe-4S] cluster</name>
        <dbReference type="ChEBI" id="CHEBI:49883"/>
        <label>2</label>
    </ligand>
</feature>
<feature type="binding site" evidence="1">
    <location>
        <position position="46"/>
    </location>
    <ligand>
        <name>[4Fe-4S] cluster</name>
        <dbReference type="ChEBI" id="CHEBI:49883"/>
        <label>2</label>
    </ligand>
</feature>
<feature type="binding site" evidence="1">
    <location>
        <position position="50"/>
    </location>
    <ligand>
        <name>[4Fe-4S] cluster</name>
        <dbReference type="ChEBI" id="CHEBI:49883"/>
        <label>1</label>
    </ligand>
</feature>
<sequence>MVAKVNVDLCTGCGSCVDECPAAAISLNDDGIATVDESECLDCGSCEDACPNNAITIE</sequence>
<proteinExistence type="inferred from homology"/>
<comment type="function">
    <text>Ferredoxins are iron-sulfur proteins that transfer electrons in a wide variety of metabolic reactions.</text>
</comment>
<comment type="cofactor">
    <cofactor evidence="1">
        <name>[4Fe-4S] cluster</name>
        <dbReference type="ChEBI" id="CHEBI:49883"/>
    </cofactor>
    <text evidence="1">Binds 2 [4Fe-4S] clusters.</text>
</comment>
<keyword id="KW-0004">4Fe-4S</keyword>
<keyword id="KW-0249">Electron transport</keyword>
<keyword id="KW-0408">Iron</keyword>
<keyword id="KW-0411">Iron-sulfur</keyword>
<keyword id="KW-0479">Metal-binding</keyword>
<keyword id="KW-0677">Repeat</keyword>
<keyword id="KW-0813">Transport</keyword>
<reference key="1">
    <citation type="journal article" date="1992" name="J. Bacteriol.">
        <title>Cloning, nucleotide sequence, and transcriptional analyses of the gene encoding a ferredoxin from Methanosarcina thermophila.</title>
        <authorList>
            <person name="Clements A.P."/>
            <person name="Ferry J.G."/>
        </authorList>
    </citation>
    <scope>NUCLEOTIDE SEQUENCE [GENOMIC DNA]</scope>
    <source>
        <strain>ATCC 43570 / DSM 1825 / OCM 12 / TM-1</strain>
    </source>
</reference>
<protein>
    <recommendedName>
        <fullName>Probable ferredoxin</fullName>
    </recommendedName>
</protein>
<evidence type="ECO:0000250" key="1"/>
<evidence type="ECO:0000255" key="2">
    <source>
        <dbReference type="PROSITE-ProRule" id="PRU00711"/>
    </source>
</evidence>
<accession>Q01700</accession>
<organism>
    <name type="scientific">Methanosarcina thermophila</name>
    <dbReference type="NCBI Taxonomy" id="2210"/>
    <lineage>
        <taxon>Archaea</taxon>
        <taxon>Methanobacteriati</taxon>
        <taxon>Methanobacteriota</taxon>
        <taxon>Stenosarchaea group</taxon>
        <taxon>Methanomicrobia</taxon>
        <taxon>Methanosarcinales</taxon>
        <taxon>Methanosarcinaceae</taxon>
        <taxon>Methanosarcina</taxon>
    </lineage>
</organism>
<dbReference type="EMBL" id="M83188">
    <property type="protein sequence ID" value="AAA73172.1"/>
    <property type="molecule type" value="Genomic_DNA"/>
</dbReference>
<dbReference type="PIR" id="B42960">
    <property type="entry name" value="B42960"/>
</dbReference>
<dbReference type="RefSeq" id="WP_048168014.1">
    <property type="nucleotide sequence ID" value="NZ_FPAO01000003.1"/>
</dbReference>
<dbReference type="SMR" id="Q01700"/>
<dbReference type="GeneID" id="41602303"/>
<dbReference type="GO" id="GO:0051539">
    <property type="term" value="F:4 iron, 4 sulfur cluster binding"/>
    <property type="evidence" value="ECO:0007669"/>
    <property type="project" value="UniProtKB-KW"/>
</dbReference>
<dbReference type="GO" id="GO:0046872">
    <property type="term" value="F:metal ion binding"/>
    <property type="evidence" value="ECO:0007669"/>
    <property type="project" value="UniProtKB-KW"/>
</dbReference>
<dbReference type="GO" id="GO:0016491">
    <property type="term" value="F:oxidoreductase activity"/>
    <property type="evidence" value="ECO:0007669"/>
    <property type="project" value="UniProtKB-ARBA"/>
</dbReference>
<dbReference type="Gene3D" id="3.30.70.20">
    <property type="match status" value="2"/>
</dbReference>
<dbReference type="InterPro" id="IPR017896">
    <property type="entry name" value="4Fe4S_Fe-S-bd"/>
</dbReference>
<dbReference type="InterPro" id="IPR017900">
    <property type="entry name" value="4Fe4S_Fe_S_CS"/>
</dbReference>
<dbReference type="InterPro" id="IPR050572">
    <property type="entry name" value="Fe-S_Ferredoxin"/>
</dbReference>
<dbReference type="PANTHER" id="PTHR43687">
    <property type="entry name" value="ADENYLYLSULFATE REDUCTASE, BETA SUBUNIT"/>
    <property type="match status" value="1"/>
</dbReference>
<dbReference type="PANTHER" id="PTHR43687:SF1">
    <property type="entry name" value="FERREDOXIN III"/>
    <property type="match status" value="1"/>
</dbReference>
<dbReference type="Pfam" id="PF12838">
    <property type="entry name" value="Fer4_7"/>
    <property type="match status" value="1"/>
</dbReference>
<dbReference type="SUPFAM" id="SSF54862">
    <property type="entry name" value="4Fe-4S ferredoxins"/>
    <property type="match status" value="1"/>
</dbReference>
<dbReference type="PROSITE" id="PS00198">
    <property type="entry name" value="4FE4S_FER_1"/>
    <property type="match status" value="2"/>
</dbReference>
<dbReference type="PROSITE" id="PS51379">
    <property type="entry name" value="4FE4S_FER_2"/>
    <property type="match status" value="2"/>
</dbReference>
<name>FER_METTE</name>